<organism>
    <name type="scientific">Methanoregula boonei (strain DSM 21154 / JCM 14090 / 6A8)</name>
    <dbReference type="NCBI Taxonomy" id="456442"/>
    <lineage>
        <taxon>Archaea</taxon>
        <taxon>Methanobacteriati</taxon>
        <taxon>Methanobacteriota</taxon>
        <taxon>Stenosarchaea group</taxon>
        <taxon>Methanomicrobia</taxon>
        <taxon>Methanomicrobiales</taxon>
        <taxon>Methanoregulaceae</taxon>
        <taxon>Methanoregula</taxon>
    </lineage>
</organism>
<gene>
    <name evidence="1" type="primary">rpiA</name>
    <name type="ordered locus">Mboo_0918</name>
</gene>
<dbReference type="EC" id="5.3.1.6" evidence="1"/>
<dbReference type="EMBL" id="CP000780">
    <property type="protein sequence ID" value="ABS55436.1"/>
    <property type="molecule type" value="Genomic_DNA"/>
</dbReference>
<dbReference type="RefSeq" id="WP_012106461.1">
    <property type="nucleotide sequence ID" value="NC_009712.1"/>
</dbReference>
<dbReference type="SMR" id="A7I6S5"/>
<dbReference type="STRING" id="456442.Mboo_0918"/>
<dbReference type="GeneID" id="5410083"/>
<dbReference type="KEGG" id="mbn:Mboo_0918"/>
<dbReference type="eggNOG" id="arCOG01122">
    <property type="taxonomic scope" value="Archaea"/>
</dbReference>
<dbReference type="HOGENOM" id="CLU_056590_1_0_2"/>
<dbReference type="OrthoDB" id="19013at2157"/>
<dbReference type="UniPathway" id="UPA00115">
    <property type="reaction ID" value="UER00412"/>
</dbReference>
<dbReference type="Proteomes" id="UP000002408">
    <property type="component" value="Chromosome"/>
</dbReference>
<dbReference type="GO" id="GO:0005829">
    <property type="term" value="C:cytosol"/>
    <property type="evidence" value="ECO:0007669"/>
    <property type="project" value="TreeGrafter"/>
</dbReference>
<dbReference type="GO" id="GO:0004751">
    <property type="term" value="F:ribose-5-phosphate isomerase activity"/>
    <property type="evidence" value="ECO:0007669"/>
    <property type="project" value="UniProtKB-UniRule"/>
</dbReference>
<dbReference type="GO" id="GO:0006014">
    <property type="term" value="P:D-ribose metabolic process"/>
    <property type="evidence" value="ECO:0007669"/>
    <property type="project" value="TreeGrafter"/>
</dbReference>
<dbReference type="GO" id="GO:0009052">
    <property type="term" value="P:pentose-phosphate shunt, non-oxidative branch"/>
    <property type="evidence" value="ECO:0007669"/>
    <property type="project" value="UniProtKB-UniRule"/>
</dbReference>
<dbReference type="CDD" id="cd01398">
    <property type="entry name" value="RPI_A"/>
    <property type="match status" value="1"/>
</dbReference>
<dbReference type="FunFam" id="3.30.70.260:FF:000018">
    <property type="entry name" value="Ribose-5-phosphate isomerase A"/>
    <property type="match status" value="1"/>
</dbReference>
<dbReference type="FunFam" id="3.40.50.1360:FF:000001">
    <property type="entry name" value="Ribose-5-phosphate isomerase A"/>
    <property type="match status" value="1"/>
</dbReference>
<dbReference type="Gene3D" id="3.30.70.260">
    <property type="match status" value="1"/>
</dbReference>
<dbReference type="Gene3D" id="3.40.50.1360">
    <property type="match status" value="1"/>
</dbReference>
<dbReference type="HAMAP" id="MF_00170">
    <property type="entry name" value="Rib_5P_isom_A"/>
    <property type="match status" value="1"/>
</dbReference>
<dbReference type="InterPro" id="IPR037171">
    <property type="entry name" value="NagB/RpiA_transferase-like"/>
</dbReference>
<dbReference type="InterPro" id="IPR020672">
    <property type="entry name" value="Ribose5P_isomerase_typA_subgr"/>
</dbReference>
<dbReference type="InterPro" id="IPR004788">
    <property type="entry name" value="Ribose5P_isomerase_type_A"/>
</dbReference>
<dbReference type="NCBIfam" id="NF001924">
    <property type="entry name" value="PRK00702.1"/>
    <property type="match status" value="1"/>
</dbReference>
<dbReference type="NCBIfam" id="TIGR00021">
    <property type="entry name" value="rpiA"/>
    <property type="match status" value="1"/>
</dbReference>
<dbReference type="PANTHER" id="PTHR11934">
    <property type="entry name" value="RIBOSE-5-PHOSPHATE ISOMERASE"/>
    <property type="match status" value="1"/>
</dbReference>
<dbReference type="PANTHER" id="PTHR11934:SF0">
    <property type="entry name" value="RIBOSE-5-PHOSPHATE ISOMERASE"/>
    <property type="match status" value="1"/>
</dbReference>
<dbReference type="Pfam" id="PF06026">
    <property type="entry name" value="Rib_5-P_isom_A"/>
    <property type="match status" value="1"/>
</dbReference>
<dbReference type="SUPFAM" id="SSF75445">
    <property type="entry name" value="D-ribose-5-phosphate isomerase (RpiA), lid domain"/>
    <property type="match status" value="1"/>
</dbReference>
<dbReference type="SUPFAM" id="SSF100950">
    <property type="entry name" value="NagB/RpiA/CoA transferase-like"/>
    <property type="match status" value="1"/>
</dbReference>
<comment type="function">
    <text evidence="1">Catalyzes the reversible conversion of ribose-5-phosphate to ribulose 5-phosphate.</text>
</comment>
<comment type="catalytic activity">
    <reaction evidence="1">
        <text>aldehydo-D-ribose 5-phosphate = D-ribulose 5-phosphate</text>
        <dbReference type="Rhea" id="RHEA:14657"/>
        <dbReference type="ChEBI" id="CHEBI:58121"/>
        <dbReference type="ChEBI" id="CHEBI:58273"/>
        <dbReference type="EC" id="5.3.1.6"/>
    </reaction>
</comment>
<comment type="pathway">
    <text evidence="1">Carbohydrate degradation; pentose phosphate pathway; D-ribose 5-phosphate from D-ribulose 5-phosphate (non-oxidative stage): step 1/1.</text>
</comment>
<comment type="subunit">
    <text evidence="1">Homodimer.</text>
</comment>
<comment type="similarity">
    <text evidence="1">Belongs to the ribose 5-phosphate isomerase family.</text>
</comment>
<proteinExistence type="inferred from homology"/>
<reference key="1">
    <citation type="journal article" date="2015" name="Microbiology">
        <title>Genome of Methanoregula boonei 6A8 reveals adaptations to oligotrophic peatland environments.</title>
        <authorList>
            <person name="Braeuer S."/>
            <person name="Cadillo-Quiroz H."/>
            <person name="Kyrpides N."/>
            <person name="Woyke T."/>
            <person name="Goodwin L."/>
            <person name="Detter C."/>
            <person name="Podell S."/>
            <person name="Yavitt J.B."/>
            <person name="Zinder S.H."/>
        </authorList>
    </citation>
    <scope>NUCLEOTIDE SEQUENCE [LARGE SCALE GENOMIC DNA]</scope>
    <source>
        <strain>DSM 21154 / JCM 14090 / 6A8</strain>
    </source>
</reference>
<feature type="chain" id="PRO_1000097673" description="Ribose-5-phosphate isomerase A">
    <location>
        <begin position="1"/>
        <end position="237"/>
    </location>
</feature>
<feature type="active site" description="Proton acceptor" evidence="1">
    <location>
        <position position="110"/>
    </location>
</feature>
<feature type="binding site" evidence="1">
    <location>
        <begin position="33"/>
        <end position="36"/>
    </location>
    <ligand>
        <name>substrate</name>
    </ligand>
</feature>
<feature type="binding site" evidence="1">
    <location>
        <begin position="88"/>
        <end position="91"/>
    </location>
    <ligand>
        <name>substrate</name>
    </ligand>
</feature>
<feature type="binding site" evidence="1">
    <location>
        <begin position="101"/>
        <end position="104"/>
    </location>
    <ligand>
        <name>substrate</name>
    </ligand>
</feature>
<feature type="binding site" evidence="1">
    <location>
        <position position="128"/>
    </location>
    <ligand>
        <name>substrate</name>
    </ligand>
</feature>
<keyword id="KW-0413">Isomerase</keyword>
<keyword id="KW-1185">Reference proteome</keyword>
<name>RPIA_METB6</name>
<accession>A7I6S5</accession>
<sequence>MAGTADAVAAAKRAAGYQAAEMVEDGMVIGLGTGSTVFYAIECLSGRIRDGLSVVGVPTSYQTAMKAREYGIPLTTLDDNPVLDLAIDGADQADPQFRLIKGRGAAITREKCVASAAFRFIVVVDEAKMVKKLAGVVPVETLPFATKTALAQLRGLGCRPFIREAVKKDGPVITDNGNFIVDCQFEEIPDPALLEAGIAAIPGVIESGLFTRLTGNTTIIVGNEKKCSVLTSPDVVP</sequence>
<evidence type="ECO:0000255" key="1">
    <source>
        <dbReference type="HAMAP-Rule" id="MF_00170"/>
    </source>
</evidence>
<protein>
    <recommendedName>
        <fullName evidence="1">Ribose-5-phosphate isomerase A</fullName>
        <ecNumber evidence="1">5.3.1.6</ecNumber>
    </recommendedName>
    <alternativeName>
        <fullName evidence="1">Phosphoriboisomerase A</fullName>
        <shortName evidence="1">PRI</shortName>
    </alternativeName>
</protein>